<name>VG38_ICHVA</name>
<proteinExistence type="predicted"/>
<organismHost>
    <name type="scientific">Ictaluridae</name>
    <name type="common">bullhead catfishes</name>
    <dbReference type="NCBI Taxonomy" id="7996"/>
</organismHost>
<dbReference type="EMBL" id="M75136">
    <property type="protein sequence ID" value="AAA88141.1"/>
    <property type="molecule type" value="Genomic_DNA"/>
</dbReference>
<dbReference type="PIR" id="C36790">
    <property type="entry name" value="C36790"/>
</dbReference>
<dbReference type="RefSeq" id="NP_041129.1">
    <property type="nucleotide sequence ID" value="NC_001493.2"/>
</dbReference>
<dbReference type="SMR" id="Q00144"/>
<dbReference type="GeneID" id="1488389"/>
<dbReference type="KEGG" id="vg:1488389"/>
<dbReference type="Proteomes" id="UP000007643">
    <property type="component" value="Segment"/>
</dbReference>
<organism>
    <name type="scientific">Ictalurid herpesvirus 1 (strain Auburn)</name>
    <name type="common">IcHV-1</name>
    <name type="synonym">Channel catfish herpesvirus</name>
    <dbReference type="NCBI Taxonomy" id="766178"/>
    <lineage>
        <taxon>Viruses</taxon>
        <taxon>Duplodnaviria</taxon>
        <taxon>Heunggongvirae</taxon>
        <taxon>Peploviricota</taxon>
        <taxon>Herviviricetes</taxon>
        <taxon>Herpesvirales</taxon>
        <taxon>Alloherpesviridae</taxon>
        <taxon>Ictavirus</taxon>
        <taxon>Ictavirus ictaluridallo1</taxon>
        <taxon>Ictalurid herpesvirus 1</taxon>
    </lineage>
</organism>
<reference key="1">
    <citation type="journal article" date="1992" name="Virology">
        <title>Channel catfish virus: a new type of herpesvirus.</title>
        <authorList>
            <person name="Davison A.J."/>
        </authorList>
    </citation>
    <scope>NUCLEOTIDE SEQUENCE [LARGE SCALE GENOMIC DNA]</scope>
</reference>
<sequence>MSVLGTCCCWCPNLYIAMMGFFRRRFTKTQVYDILSANDPNLTPDISMRAVDHYRQAARLTSICAQHPAVMGTRDICALEKRAATNIAAGNALMDQLNKWTMDRAENSTTNLVGIINDINS</sequence>
<feature type="chain" id="PRO_0000222120" description="Uncharacterized protein ORF38">
    <location>
        <begin position="1"/>
        <end position="121"/>
    </location>
</feature>
<keyword id="KW-1185">Reference proteome</keyword>
<protein>
    <recommendedName>
        <fullName>Uncharacterized protein ORF38</fullName>
    </recommendedName>
</protein>
<accession>Q00144</accession>
<gene>
    <name type="primary">ORF38</name>
</gene>